<keyword id="KW-0030">Aminoacyl-tRNA synthetase</keyword>
<keyword id="KW-0067">ATP-binding</keyword>
<keyword id="KW-0963">Cytoplasm</keyword>
<keyword id="KW-0436">Ligase</keyword>
<keyword id="KW-0547">Nucleotide-binding</keyword>
<keyword id="KW-0648">Protein biosynthesis</keyword>
<feature type="chain" id="PRO_1000006698" description="Aspartate--tRNA(Asp/Asn) ligase">
    <location>
        <begin position="1"/>
        <end position="599"/>
    </location>
</feature>
<feature type="region of interest" description="Aspartate" evidence="1">
    <location>
        <begin position="197"/>
        <end position="200"/>
    </location>
</feature>
<feature type="binding site" evidence="1">
    <location>
        <position position="173"/>
    </location>
    <ligand>
        <name>L-aspartate</name>
        <dbReference type="ChEBI" id="CHEBI:29991"/>
    </ligand>
</feature>
<feature type="binding site" evidence="1">
    <location>
        <begin position="219"/>
        <end position="221"/>
    </location>
    <ligand>
        <name>ATP</name>
        <dbReference type="ChEBI" id="CHEBI:30616"/>
    </ligand>
</feature>
<feature type="binding site" evidence="1">
    <location>
        <position position="219"/>
    </location>
    <ligand>
        <name>L-aspartate</name>
        <dbReference type="ChEBI" id="CHEBI:29991"/>
    </ligand>
</feature>
<feature type="binding site" evidence="1">
    <location>
        <position position="228"/>
    </location>
    <ligand>
        <name>ATP</name>
        <dbReference type="ChEBI" id="CHEBI:30616"/>
    </ligand>
</feature>
<feature type="binding site" evidence="1">
    <location>
        <position position="449"/>
    </location>
    <ligand>
        <name>L-aspartate</name>
        <dbReference type="ChEBI" id="CHEBI:29991"/>
    </ligand>
</feature>
<feature type="binding site" evidence="1">
    <location>
        <position position="482"/>
    </location>
    <ligand>
        <name>ATP</name>
        <dbReference type="ChEBI" id="CHEBI:30616"/>
    </ligand>
</feature>
<feature type="binding site" evidence="1">
    <location>
        <position position="489"/>
    </location>
    <ligand>
        <name>L-aspartate</name>
        <dbReference type="ChEBI" id="CHEBI:29991"/>
    </ligand>
</feature>
<feature type="binding site" evidence="1">
    <location>
        <begin position="534"/>
        <end position="537"/>
    </location>
    <ligand>
        <name>ATP</name>
        <dbReference type="ChEBI" id="CHEBI:30616"/>
    </ligand>
</feature>
<feature type="site" description="Important for tRNA non-discrimination" evidence="1">
    <location>
        <position position="30"/>
    </location>
</feature>
<feature type="site" description="Important for tRNA non-discrimination" evidence="1">
    <location>
        <position position="81"/>
    </location>
</feature>
<sequence length="599" mass="67005">MRSHYCGGINESHIDQEVTLCGWVHRRRDHGGVIFLDLRDRDGMSQVVVDPDTPESFALAEKVRSEFVIKVTGRVRRRPAGTENNNMPTGQVELLGKELVILNAAATPPFPLDEHVDVGEDVRLRYRFVDLRRPEMINRLRFRSRVTSYIRNFLDSRGFMDVETPILTRATPEGARDYLVPSRTHEGSFFALPQSPQLFKQLLMVSGVDRYYQIAKCFRDEDLRADRQPEFTQVDIEASFIDEETLMGLNEEMIRSLFKDVLDVELPEFPRMPYSEAMQRYGSDKPDLRIPLELQDVGDLVESVDFKVFAGPAKDPKGRVAALRVPKGAELTRKQIDDYTRFVGIYGAKGLAYIKVNELTKGAEGLQSPIVKFLGDDVALAIMERVGAEDGDIVFFGADKATVVNEALGALRIKVGHDLNMLTCEWAPMWVVDFPMFEELPDGNLTAIHHPFTAPSCSPEDLAADPANALSRAYDMVLNGTELGGGSIRIHDEKMQEAVFRILGIGEEEARAKFGFLLDALKFGCPPHGGLAFGLDRLVMLMTGSSSIRDVIAFPKTQSATCLMTQAPGEVDEKQLKELHIRLRRSAKAVEGNKAENKE</sequence>
<proteinExistence type="inferred from homology"/>
<dbReference type="EC" id="6.1.1.23" evidence="1"/>
<dbReference type="EMBL" id="CP000514">
    <property type="protein sequence ID" value="ABM18791.1"/>
    <property type="molecule type" value="Genomic_DNA"/>
</dbReference>
<dbReference type="RefSeq" id="WP_011785190.1">
    <property type="nucleotide sequence ID" value="NC_008740.1"/>
</dbReference>
<dbReference type="SMR" id="A1U1C2"/>
<dbReference type="STRING" id="351348.Maqu_1707"/>
<dbReference type="KEGG" id="maq:Maqu_1707"/>
<dbReference type="eggNOG" id="COG0173">
    <property type="taxonomic scope" value="Bacteria"/>
</dbReference>
<dbReference type="HOGENOM" id="CLU_014330_3_2_6"/>
<dbReference type="OrthoDB" id="9802326at2"/>
<dbReference type="Proteomes" id="UP000000998">
    <property type="component" value="Chromosome"/>
</dbReference>
<dbReference type="GO" id="GO:0005737">
    <property type="term" value="C:cytoplasm"/>
    <property type="evidence" value="ECO:0007669"/>
    <property type="project" value="UniProtKB-SubCell"/>
</dbReference>
<dbReference type="GO" id="GO:0004815">
    <property type="term" value="F:aspartate-tRNA ligase activity"/>
    <property type="evidence" value="ECO:0007669"/>
    <property type="project" value="UniProtKB-UniRule"/>
</dbReference>
<dbReference type="GO" id="GO:0050560">
    <property type="term" value="F:aspartate-tRNA(Asn) ligase activity"/>
    <property type="evidence" value="ECO:0007669"/>
    <property type="project" value="UniProtKB-EC"/>
</dbReference>
<dbReference type="GO" id="GO:0005524">
    <property type="term" value="F:ATP binding"/>
    <property type="evidence" value="ECO:0007669"/>
    <property type="project" value="UniProtKB-UniRule"/>
</dbReference>
<dbReference type="GO" id="GO:0003676">
    <property type="term" value="F:nucleic acid binding"/>
    <property type="evidence" value="ECO:0007669"/>
    <property type="project" value="InterPro"/>
</dbReference>
<dbReference type="GO" id="GO:0006422">
    <property type="term" value="P:aspartyl-tRNA aminoacylation"/>
    <property type="evidence" value="ECO:0007669"/>
    <property type="project" value="UniProtKB-UniRule"/>
</dbReference>
<dbReference type="CDD" id="cd00777">
    <property type="entry name" value="AspRS_core"/>
    <property type="match status" value="1"/>
</dbReference>
<dbReference type="CDD" id="cd04317">
    <property type="entry name" value="EcAspRS_like_N"/>
    <property type="match status" value="1"/>
</dbReference>
<dbReference type="Gene3D" id="3.30.930.10">
    <property type="entry name" value="Bira Bifunctional Protein, Domain 2"/>
    <property type="match status" value="1"/>
</dbReference>
<dbReference type="Gene3D" id="3.30.1360.30">
    <property type="entry name" value="GAD-like domain"/>
    <property type="match status" value="1"/>
</dbReference>
<dbReference type="Gene3D" id="2.40.50.140">
    <property type="entry name" value="Nucleic acid-binding proteins"/>
    <property type="match status" value="1"/>
</dbReference>
<dbReference type="HAMAP" id="MF_00044">
    <property type="entry name" value="Asp_tRNA_synth_type1"/>
    <property type="match status" value="1"/>
</dbReference>
<dbReference type="InterPro" id="IPR004364">
    <property type="entry name" value="Aa-tRNA-synt_II"/>
</dbReference>
<dbReference type="InterPro" id="IPR006195">
    <property type="entry name" value="aa-tRNA-synth_II"/>
</dbReference>
<dbReference type="InterPro" id="IPR045864">
    <property type="entry name" value="aa-tRNA-synth_II/BPL/LPL"/>
</dbReference>
<dbReference type="InterPro" id="IPR004524">
    <property type="entry name" value="Asp-tRNA-ligase_1"/>
</dbReference>
<dbReference type="InterPro" id="IPR047089">
    <property type="entry name" value="Asp-tRNA-ligase_1_N"/>
</dbReference>
<dbReference type="InterPro" id="IPR002312">
    <property type="entry name" value="Asp/Asn-tRNA-synth_IIb"/>
</dbReference>
<dbReference type="InterPro" id="IPR047090">
    <property type="entry name" value="AspRS_core"/>
</dbReference>
<dbReference type="InterPro" id="IPR004115">
    <property type="entry name" value="GAD-like_sf"/>
</dbReference>
<dbReference type="InterPro" id="IPR029351">
    <property type="entry name" value="GAD_dom"/>
</dbReference>
<dbReference type="InterPro" id="IPR012340">
    <property type="entry name" value="NA-bd_OB-fold"/>
</dbReference>
<dbReference type="InterPro" id="IPR004365">
    <property type="entry name" value="NA-bd_OB_tRNA"/>
</dbReference>
<dbReference type="NCBIfam" id="TIGR00459">
    <property type="entry name" value="aspS_bact"/>
    <property type="match status" value="1"/>
</dbReference>
<dbReference type="NCBIfam" id="NF001750">
    <property type="entry name" value="PRK00476.1"/>
    <property type="match status" value="1"/>
</dbReference>
<dbReference type="PANTHER" id="PTHR22594:SF5">
    <property type="entry name" value="ASPARTATE--TRNA LIGASE, MITOCHONDRIAL"/>
    <property type="match status" value="1"/>
</dbReference>
<dbReference type="PANTHER" id="PTHR22594">
    <property type="entry name" value="ASPARTYL/LYSYL-TRNA SYNTHETASE"/>
    <property type="match status" value="1"/>
</dbReference>
<dbReference type="Pfam" id="PF02938">
    <property type="entry name" value="GAD"/>
    <property type="match status" value="1"/>
</dbReference>
<dbReference type="Pfam" id="PF00152">
    <property type="entry name" value="tRNA-synt_2"/>
    <property type="match status" value="1"/>
</dbReference>
<dbReference type="Pfam" id="PF01336">
    <property type="entry name" value="tRNA_anti-codon"/>
    <property type="match status" value="1"/>
</dbReference>
<dbReference type="PRINTS" id="PR01042">
    <property type="entry name" value="TRNASYNTHASP"/>
</dbReference>
<dbReference type="SUPFAM" id="SSF55681">
    <property type="entry name" value="Class II aaRS and biotin synthetases"/>
    <property type="match status" value="1"/>
</dbReference>
<dbReference type="SUPFAM" id="SSF55261">
    <property type="entry name" value="GAD domain-like"/>
    <property type="match status" value="1"/>
</dbReference>
<dbReference type="SUPFAM" id="SSF50249">
    <property type="entry name" value="Nucleic acid-binding proteins"/>
    <property type="match status" value="1"/>
</dbReference>
<dbReference type="PROSITE" id="PS50862">
    <property type="entry name" value="AA_TRNA_LIGASE_II"/>
    <property type="match status" value="1"/>
</dbReference>
<protein>
    <recommendedName>
        <fullName evidence="1">Aspartate--tRNA(Asp/Asn) ligase</fullName>
        <ecNumber evidence="1">6.1.1.23</ecNumber>
    </recommendedName>
    <alternativeName>
        <fullName evidence="1">Aspartyl-tRNA synthetase</fullName>
        <shortName evidence="1">AspRS</shortName>
    </alternativeName>
    <alternativeName>
        <fullName evidence="1">Non-discriminating aspartyl-tRNA synthetase</fullName>
        <shortName evidence="1">ND-AspRS</shortName>
    </alternativeName>
</protein>
<gene>
    <name evidence="1" type="primary">aspS</name>
    <name type="ordered locus">Maqu_1707</name>
</gene>
<reference key="1">
    <citation type="journal article" date="2011" name="Appl. Environ. Microbiol.">
        <title>Genomic potential of Marinobacter aquaeolei, a biogeochemical 'opportunitroph'.</title>
        <authorList>
            <person name="Singer E."/>
            <person name="Webb E.A."/>
            <person name="Nelson W.C."/>
            <person name="Heidelberg J.F."/>
            <person name="Ivanova N."/>
            <person name="Pati A."/>
            <person name="Edwards K.J."/>
        </authorList>
    </citation>
    <scope>NUCLEOTIDE SEQUENCE [LARGE SCALE GENOMIC DNA]</scope>
    <source>
        <strain>ATCC 700491 / DSM 11845 / VT8</strain>
    </source>
</reference>
<comment type="function">
    <text evidence="1">Aspartyl-tRNA synthetase with relaxed tRNA specificity since it is able to aspartylate not only its cognate tRNA(Asp) but also tRNA(Asn). Reaction proceeds in two steps: L-aspartate is first activated by ATP to form Asp-AMP and then transferred to the acceptor end of tRNA(Asp/Asn).</text>
</comment>
<comment type="catalytic activity">
    <reaction evidence="1">
        <text>tRNA(Asx) + L-aspartate + ATP = L-aspartyl-tRNA(Asx) + AMP + diphosphate</text>
        <dbReference type="Rhea" id="RHEA:18349"/>
        <dbReference type="Rhea" id="RHEA-COMP:9710"/>
        <dbReference type="Rhea" id="RHEA-COMP:9711"/>
        <dbReference type="ChEBI" id="CHEBI:29991"/>
        <dbReference type="ChEBI" id="CHEBI:30616"/>
        <dbReference type="ChEBI" id="CHEBI:33019"/>
        <dbReference type="ChEBI" id="CHEBI:78442"/>
        <dbReference type="ChEBI" id="CHEBI:78516"/>
        <dbReference type="ChEBI" id="CHEBI:456215"/>
        <dbReference type="EC" id="6.1.1.23"/>
    </reaction>
</comment>
<comment type="subunit">
    <text evidence="1">Homodimer.</text>
</comment>
<comment type="subcellular location">
    <subcellularLocation>
        <location evidence="1">Cytoplasm</location>
    </subcellularLocation>
</comment>
<comment type="similarity">
    <text evidence="1">Belongs to the class-II aminoacyl-tRNA synthetase family. Type 1 subfamily.</text>
</comment>
<evidence type="ECO:0000255" key="1">
    <source>
        <dbReference type="HAMAP-Rule" id="MF_00044"/>
    </source>
</evidence>
<accession>A1U1C2</accession>
<name>SYDND_MARN8</name>
<organism>
    <name type="scientific">Marinobacter nauticus (strain ATCC 700491 / DSM 11845 / VT8)</name>
    <name type="common">Marinobacter aquaeolei</name>
    <dbReference type="NCBI Taxonomy" id="351348"/>
    <lineage>
        <taxon>Bacteria</taxon>
        <taxon>Pseudomonadati</taxon>
        <taxon>Pseudomonadota</taxon>
        <taxon>Gammaproteobacteria</taxon>
        <taxon>Pseudomonadales</taxon>
        <taxon>Marinobacteraceae</taxon>
        <taxon>Marinobacter</taxon>
    </lineage>
</organism>